<name>TPIS_STRM5</name>
<accession>B4SQT8</accession>
<comment type="function">
    <text evidence="1">Involved in the gluconeogenesis. Catalyzes stereospecifically the conversion of dihydroxyacetone phosphate (DHAP) to D-glyceraldehyde-3-phosphate (G3P).</text>
</comment>
<comment type="catalytic activity">
    <reaction evidence="1">
        <text>D-glyceraldehyde 3-phosphate = dihydroxyacetone phosphate</text>
        <dbReference type="Rhea" id="RHEA:18585"/>
        <dbReference type="ChEBI" id="CHEBI:57642"/>
        <dbReference type="ChEBI" id="CHEBI:59776"/>
        <dbReference type="EC" id="5.3.1.1"/>
    </reaction>
</comment>
<comment type="pathway">
    <text evidence="1">Carbohydrate biosynthesis; gluconeogenesis.</text>
</comment>
<comment type="pathway">
    <text evidence="1">Carbohydrate degradation; glycolysis; D-glyceraldehyde 3-phosphate from glycerone phosphate: step 1/1.</text>
</comment>
<comment type="subunit">
    <text evidence="1">Homodimer.</text>
</comment>
<comment type="subcellular location">
    <subcellularLocation>
        <location evidence="1">Cytoplasm</location>
    </subcellularLocation>
</comment>
<comment type="similarity">
    <text evidence="1">Belongs to the triosephosphate isomerase family.</text>
</comment>
<gene>
    <name evidence="1" type="primary">tpiA</name>
    <name type="ordered locus">Smal_2833</name>
</gene>
<evidence type="ECO:0000255" key="1">
    <source>
        <dbReference type="HAMAP-Rule" id="MF_00147"/>
    </source>
</evidence>
<dbReference type="EC" id="5.3.1.1" evidence="1"/>
<dbReference type="EMBL" id="CP001111">
    <property type="protein sequence ID" value="ACF52533.1"/>
    <property type="molecule type" value="Genomic_DNA"/>
</dbReference>
<dbReference type="RefSeq" id="WP_012511712.1">
    <property type="nucleotide sequence ID" value="NC_011071.1"/>
</dbReference>
<dbReference type="SMR" id="B4SQT8"/>
<dbReference type="STRING" id="391008.Smal_2833"/>
<dbReference type="KEGG" id="smt:Smal_2833"/>
<dbReference type="eggNOG" id="COG0149">
    <property type="taxonomic scope" value="Bacteria"/>
</dbReference>
<dbReference type="HOGENOM" id="CLU_024251_2_1_6"/>
<dbReference type="OrthoDB" id="9809429at2"/>
<dbReference type="UniPathway" id="UPA00109">
    <property type="reaction ID" value="UER00189"/>
</dbReference>
<dbReference type="UniPathway" id="UPA00138"/>
<dbReference type="Proteomes" id="UP000001867">
    <property type="component" value="Chromosome"/>
</dbReference>
<dbReference type="GO" id="GO:0005829">
    <property type="term" value="C:cytosol"/>
    <property type="evidence" value="ECO:0007669"/>
    <property type="project" value="TreeGrafter"/>
</dbReference>
<dbReference type="GO" id="GO:0004807">
    <property type="term" value="F:triose-phosphate isomerase activity"/>
    <property type="evidence" value="ECO:0007669"/>
    <property type="project" value="UniProtKB-UniRule"/>
</dbReference>
<dbReference type="GO" id="GO:0006094">
    <property type="term" value="P:gluconeogenesis"/>
    <property type="evidence" value="ECO:0007669"/>
    <property type="project" value="UniProtKB-UniRule"/>
</dbReference>
<dbReference type="GO" id="GO:0046166">
    <property type="term" value="P:glyceraldehyde-3-phosphate biosynthetic process"/>
    <property type="evidence" value="ECO:0007669"/>
    <property type="project" value="TreeGrafter"/>
</dbReference>
<dbReference type="GO" id="GO:0019563">
    <property type="term" value="P:glycerol catabolic process"/>
    <property type="evidence" value="ECO:0007669"/>
    <property type="project" value="TreeGrafter"/>
</dbReference>
<dbReference type="GO" id="GO:0006096">
    <property type="term" value="P:glycolytic process"/>
    <property type="evidence" value="ECO:0007669"/>
    <property type="project" value="UniProtKB-UniRule"/>
</dbReference>
<dbReference type="CDD" id="cd00311">
    <property type="entry name" value="TIM"/>
    <property type="match status" value="1"/>
</dbReference>
<dbReference type="FunFam" id="3.20.20.70:FF:000016">
    <property type="entry name" value="Triosephosphate isomerase"/>
    <property type="match status" value="1"/>
</dbReference>
<dbReference type="Gene3D" id="3.20.20.70">
    <property type="entry name" value="Aldolase class I"/>
    <property type="match status" value="1"/>
</dbReference>
<dbReference type="HAMAP" id="MF_00147_B">
    <property type="entry name" value="TIM_B"/>
    <property type="match status" value="1"/>
</dbReference>
<dbReference type="InterPro" id="IPR013785">
    <property type="entry name" value="Aldolase_TIM"/>
</dbReference>
<dbReference type="InterPro" id="IPR035990">
    <property type="entry name" value="TIM_sf"/>
</dbReference>
<dbReference type="InterPro" id="IPR022896">
    <property type="entry name" value="TrioseP_Isoase_bac/euk"/>
</dbReference>
<dbReference type="InterPro" id="IPR000652">
    <property type="entry name" value="Triosephosphate_isomerase"/>
</dbReference>
<dbReference type="InterPro" id="IPR020861">
    <property type="entry name" value="Triosephosphate_isomerase_AS"/>
</dbReference>
<dbReference type="NCBIfam" id="TIGR00419">
    <property type="entry name" value="tim"/>
    <property type="match status" value="1"/>
</dbReference>
<dbReference type="PANTHER" id="PTHR21139">
    <property type="entry name" value="TRIOSEPHOSPHATE ISOMERASE"/>
    <property type="match status" value="1"/>
</dbReference>
<dbReference type="PANTHER" id="PTHR21139:SF42">
    <property type="entry name" value="TRIOSEPHOSPHATE ISOMERASE"/>
    <property type="match status" value="1"/>
</dbReference>
<dbReference type="Pfam" id="PF00121">
    <property type="entry name" value="TIM"/>
    <property type="match status" value="1"/>
</dbReference>
<dbReference type="SUPFAM" id="SSF51351">
    <property type="entry name" value="Triosephosphate isomerase (TIM)"/>
    <property type="match status" value="1"/>
</dbReference>
<dbReference type="PROSITE" id="PS00171">
    <property type="entry name" value="TIM_1"/>
    <property type="match status" value="1"/>
</dbReference>
<dbReference type="PROSITE" id="PS51440">
    <property type="entry name" value="TIM_2"/>
    <property type="match status" value="1"/>
</dbReference>
<protein>
    <recommendedName>
        <fullName evidence="1">Triosephosphate isomerase</fullName>
        <shortName evidence="1">TIM</shortName>
        <shortName evidence="1">TPI</shortName>
        <ecNumber evidence="1">5.3.1.1</ecNumber>
    </recommendedName>
    <alternativeName>
        <fullName evidence="1">Triose-phosphate isomerase</fullName>
    </alternativeName>
</protein>
<organism>
    <name type="scientific">Stenotrophomonas maltophilia (strain R551-3)</name>
    <dbReference type="NCBI Taxonomy" id="391008"/>
    <lineage>
        <taxon>Bacteria</taxon>
        <taxon>Pseudomonadati</taxon>
        <taxon>Pseudomonadota</taxon>
        <taxon>Gammaproteobacteria</taxon>
        <taxon>Lysobacterales</taxon>
        <taxon>Lysobacteraceae</taxon>
        <taxon>Stenotrophomonas</taxon>
        <taxon>Stenotrophomonas maltophilia group</taxon>
    </lineage>
</organism>
<keyword id="KW-0963">Cytoplasm</keyword>
<keyword id="KW-0312">Gluconeogenesis</keyword>
<keyword id="KW-0324">Glycolysis</keyword>
<keyword id="KW-0413">Isomerase</keyword>
<proteinExistence type="inferred from homology"/>
<feature type="chain" id="PRO_1000096536" description="Triosephosphate isomerase">
    <location>
        <begin position="1"/>
        <end position="251"/>
    </location>
</feature>
<feature type="active site" description="Electrophile" evidence="1">
    <location>
        <position position="94"/>
    </location>
</feature>
<feature type="active site" description="Proton acceptor" evidence="1">
    <location>
        <position position="166"/>
    </location>
</feature>
<feature type="binding site" evidence="1">
    <location>
        <begin position="9"/>
        <end position="11"/>
    </location>
    <ligand>
        <name>substrate</name>
    </ligand>
</feature>
<feature type="binding site" evidence="1">
    <location>
        <position position="172"/>
    </location>
    <ligand>
        <name>substrate</name>
    </ligand>
</feature>
<feature type="binding site" evidence="1">
    <location>
        <position position="211"/>
    </location>
    <ligand>
        <name>substrate</name>
    </ligand>
</feature>
<feature type="binding site" evidence="1">
    <location>
        <begin position="232"/>
        <end position="233"/>
    </location>
    <ligand>
        <name>substrate</name>
    </ligand>
</feature>
<sequence>MRRKIVAGNWKLHGSRQFANELLGQVAAGLPLEGVDVVILPPLPYLGELVEDFGDTGLAFGAQDVSSNEKGAYTGEVCAAMLVEVGARYGLVGHSERRQYHHESSELVARKFAAAQHAGLVPVLCVGETLEQREAGQTNVVIASQLAPVLELVGAAGFAKAVVAYEPVWAIGTGRTATKEQAQQVHAFIRGEVARIDARIADSLPIVYGGSVKPDNAGELFAQPDVDGGLVGGASLVAADFLAIARAAAAN</sequence>
<reference key="1">
    <citation type="submission" date="2008-06" db="EMBL/GenBank/DDBJ databases">
        <title>Complete sequence of Stenotrophomonas maltophilia R551-3.</title>
        <authorList>
            <consortium name="US DOE Joint Genome Institute"/>
            <person name="Lucas S."/>
            <person name="Copeland A."/>
            <person name="Lapidus A."/>
            <person name="Glavina del Rio T."/>
            <person name="Dalin E."/>
            <person name="Tice H."/>
            <person name="Pitluck S."/>
            <person name="Chain P."/>
            <person name="Malfatti S."/>
            <person name="Shin M."/>
            <person name="Vergez L."/>
            <person name="Lang D."/>
            <person name="Schmutz J."/>
            <person name="Larimer F."/>
            <person name="Land M."/>
            <person name="Hauser L."/>
            <person name="Kyrpides N."/>
            <person name="Mikhailova N."/>
            <person name="Taghavi S."/>
            <person name="Monchy S."/>
            <person name="Newman L."/>
            <person name="Vangronsveld J."/>
            <person name="van der Lelie D."/>
            <person name="Richardson P."/>
        </authorList>
    </citation>
    <scope>NUCLEOTIDE SEQUENCE [LARGE SCALE GENOMIC DNA]</scope>
    <source>
        <strain>R551-3</strain>
    </source>
</reference>